<proteinExistence type="evidence at protein level"/>
<evidence type="ECO:0000250" key="1"/>
<evidence type="ECO:0000269" key="2">
    <source>
    </source>
</evidence>
<evidence type="ECO:0000305" key="3"/>
<name>NT5D4_HUMAN</name>
<reference key="1">
    <citation type="journal article" date="2005" name="Nature">
        <title>Generation and annotation of the DNA sequences of human chromosomes 2 and 4.</title>
        <authorList>
            <person name="Hillier L.W."/>
            <person name="Graves T.A."/>
            <person name="Fulton R.S."/>
            <person name="Fulton L.A."/>
            <person name="Pepin K.H."/>
            <person name="Minx P."/>
            <person name="Wagner-McPherson C."/>
            <person name="Layman D."/>
            <person name="Wylie K."/>
            <person name="Sekhon M."/>
            <person name="Becker M.C."/>
            <person name="Fewell G.A."/>
            <person name="Delehaunty K.D."/>
            <person name="Miner T.L."/>
            <person name="Nash W.E."/>
            <person name="Kremitzki C."/>
            <person name="Oddy L."/>
            <person name="Du H."/>
            <person name="Sun H."/>
            <person name="Bradshaw-Cordum H."/>
            <person name="Ali J."/>
            <person name="Carter J."/>
            <person name="Cordes M."/>
            <person name="Harris A."/>
            <person name="Isak A."/>
            <person name="van Brunt A."/>
            <person name="Nguyen C."/>
            <person name="Du F."/>
            <person name="Courtney L."/>
            <person name="Kalicki J."/>
            <person name="Ozersky P."/>
            <person name="Abbott S."/>
            <person name="Armstrong J."/>
            <person name="Belter E.A."/>
            <person name="Caruso L."/>
            <person name="Cedroni M."/>
            <person name="Cotton M."/>
            <person name="Davidson T."/>
            <person name="Desai A."/>
            <person name="Elliott G."/>
            <person name="Erb T."/>
            <person name="Fronick C."/>
            <person name="Gaige T."/>
            <person name="Haakenson W."/>
            <person name="Haglund K."/>
            <person name="Holmes A."/>
            <person name="Harkins R."/>
            <person name="Kim K."/>
            <person name="Kruchowski S.S."/>
            <person name="Strong C.M."/>
            <person name="Grewal N."/>
            <person name="Goyea E."/>
            <person name="Hou S."/>
            <person name="Levy A."/>
            <person name="Martinka S."/>
            <person name="Mead K."/>
            <person name="McLellan M.D."/>
            <person name="Meyer R."/>
            <person name="Randall-Maher J."/>
            <person name="Tomlinson C."/>
            <person name="Dauphin-Kohlberg S."/>
            <person name="Kozlowicz-Reilly A."/>
            <person name="Shah N."/>
            <person name="Swearengen-Shahid S."/>
            <person name="Snider J."/>
            <person name="Strong J.T."/>
            <person name="Thompson J."/>
            <person name="Yoakum M."/>
            <person name="Leonard S."/>
            <person name="Pearman C."/>
            <person name="Trani L."/>
            <person name="Radionenko M."/>
            <person name="Waligorski J.E."/>
            <person name="Wang C."/>
            <person name="Rock S.M."/>
            <person name="Tin-Wollam A.-M."/>
            <person name="Maupin R."/>
            <person name="Latreille P."/>
            <person name="Wendl M.C."/>
            <person name="Yang S.-P."/>
            <person name="Pohl C."/>
            <person name="Wallis J.W."/>
            <person name="Spieth J."/>
            <person name="Bieri T.A."/>
            <person name="Berkowicz N."/>
            <person name="Nelson J.O."/>
            <person name="Osborne J."/>
            <person name="Ding L."/>
            <person name="Meyer R."/>
            <person name="Sabo A."/>
            <person name="Shotland Y."/>
            <person name="Sinha P."/>
            <person name="Wohldmann P.E."/>
            <person name="Cook L.L."/>
            <person name="Hickenbotham M.T."/>
            <person name="Eldred J."/>
            <person name="Williams D."/>
            <person name="Jones T.A."/>
            <person name="She X."/>
            <person name="Ciccarelli F.D."/>
            <person name="Izaurralde E."/>
            <person name="Taylor J."/>
            <person name="Schmutz J."/>
            <person name="Myers R.M."/>
            <person name="Cox D.R."/>
            <person name="Huang X."/>
            <person name="McPherson J.D."/>
            <person name="Mardis E.R."/>
            <person name="Clifton S.W."/>
            <person name="Warren W.C."/>
            <person name="Chinwalla A.T."/>
            <person name="Eddy S.R."/>
            <person name="Marra M.A."/>
            <person name="Ovcharenko I."/>
            <person name="Furey T.S."/>
            <person name="Miller W."/>
            <person name="Eichler E.E."/>
            <person name="Bork P."/>
            <person name="Suyama M."/>
            <person name="Torrents D."/>
            <person name="Waterston R.H."/>
            <person name="Wilson R.K."/>
        </authorList>
    </citation>
    <scope>NUCLEOTIDE SEQUENCE [LARGE SCALE GENOMIC DNA]</scope>
</reference>
<reference key="2">
    <citation type="journal article" date="2004" name="Genome Res.">
        <title>The status, quality, and expansion of the NIH full-length cDNA project: the Mammalian Gene Collection (MGC).</title>
        <authorList>
            <consortium name="The MGC Project Team"/>
        </authorList>
    </citation>
    <scope>NUCLEOTIDE SEQUENCE [LARGE SCALE MRNA] (ISOFORM 1)</scope>
    <scope>VARIANT SER-283</scope>
    <source>
        <tissue>Brain</tissue>
    </source>
</reference>
<comment type="alternative products">
    <event type="alternative splicing"/>
    <isoform>
        <id>Q86YG4-1</id>
        <name>1</name>
        <sequence type="displayed"/>
    </isoform>
    <isoform>
        <id>Q86YG4-2</id>
        <name>2</name>
        <sequence type="described" ref="VSP_062197 VSP_062198 VSP_062199 VSP_062200"/>
    </isoform>
</comment>
<comment type="miscellaneous">
    <molecule>Isoform 2</molecule>
    <text evidence="3">Gene prediction based on conservation.</text>
</comment>
<comment type="similarity">
    <text evidence="3">Belongs to the 5'(3')-deoxyribonucleotidase family.</text>
</comment>
<comment type="sequence caution" evidence="3">
    <conflict type="erroneous initiation">
        <sequence resource="EMBL-CDS" id="AAH41437"/>
    </conflict>
    <text>Extended N-terminus.</text>
</comment>
<gene>
    <name type="primary">NT5DC4</name>
</gene>
<keyword id="KW-0025">Alternative splicing</keyword>
<keyword id="KW-0378">Hydrolase</keyword>
<keyword id="KW-0460">Magnesium</keyword>
<keyword id="KW-0479">Metal-binding</keyword>
<keyword id="KW-1267">Proteomics identification</keyword>
<keyword id="KW-1185">Reference proteome</keyword>
<sequence>MPAWIFVNRSLALGKIRCFGFDMDYTLAAYKSPAYEALTFELLLERLVCIGYPHEILRYTYDPTFPTRRLVFDELYGNLLKVDAHGNVLLGAYGFTFLSEAEIWSFYPSKFIQRDDLQCFYILNMLFNLPETYLYACLVDFFSGCSRYTNCDTGYQHGNLFMSFRSLFQDVTDAMNNIHQSGCLKKTLEDLEKYVKKDPRLPILLGKMKEVGKVFLATNSSYNYTNAIMTYLFSISEAEASGRPWRSYFDLIVVDTQKPHFFAEGLVLRQVNTDSGKLHVGTYTGPHQHCAVYSGGSSDMVCELLGVRGMDILYIGDHIFGDILKSKKRQGWRTCLVVPELSWELDIWAQEKERLEELKRLDTHLADIYQHMDGSSCELQVINFTKREIQMPHESVVEQEQANLDPASCLLSCNQRSLPAKSCLSSAI</sequence>
<accession>Q86YG4</accession>
<accession>A0A8I5KS70</accession>
<dbReference type="EMBL" id="AC079922">
    <property type="status" value="NOT_ANNOTATED_CDS"/>
    <property type="molecule type" value="Genomic_DNA"/>
</dbReference>
<dbReference type="EMBL" id="BC041437">
    <property type="protein sequence ID" value="AAH41437.1"/>
    <property type="status" value="ALT_INIT"/>
    <property type="molecule type" value="mRNA"/>
</dbReference>
<dbReference type="CCDS" id="CCDS86877.1">
    <molecule id="Q86YG4-1"/>
</dbReference>
<dbReference type="CCDS" id="CCDS92846.1">
    <molecule id="Q86YG4-2"/>
</dbReference>
<dbReference type="RefSeq" id="NP_001337423.1">
    <molecule id="Q86YG4-1"/>
    <property type="nucleotide sequence ID" value="NM_001350494.2"/>
</dbReference>
<dbReference type="RefSeq" id="NP_001380584.1">
    <molecule id="Q86YG4-2"/>
    <property type="nucleotide sequence ID" value="NM_001393655.1"/>
</dbReference>
<dbReference type="SMR" id="Q86YG4"/>
<dbReference type="BioGRID" id="129986">
    <property type="interactions" value="2"/>
</dbReference>
<dbReference type="FunCoup" id="Q86YG4">
    <property type="interactions" value="177"/>
</dbReference>
<dbReference type="IntAct" id="Q86YG4">
    <property type="interactions" value="1"/>
</dbReference>
<dbReference type="STRING" id="9606.ENSP00000330247"/>
<dbReference type="DEPOD" id="NT5DC4"/>
<dbReference type="iPTMnet" id="Q86YG4"/>
<dbReference type="PhosphoSitePlus" id="Q86YG4"/>
<dbReference type="BioMuta" id="NT5DC4"/>
<dbReference type="jPOST" id="Q86YG4"/>
<dbReference type="MassIVE" id="Q86YG4"/>
<dbReference type="PaxDb" id="9606-ENSP00000330247"/>
<dbReference type="PeptideAtlas" id="Q86YG4"/>
<dbReference type="ProteomicsDB" id="70413"/>
<dbReference type="Antibodypedia" id="63788">
    <property type="antibodies" value="53 antibodies from 12 providers"/>
</dbReference>
<dbReference type="Ensembl" id="ENST00000327581.4">
    <molecule id="Q86YG4-1"/>
    <property type="protein sequence ID" value="ENSP00000330247.4"/>
    <property type="gene ID" value="ENSG00000144130.12"/>
</dbReference>
<dbReference type="Ensembl" id="ENST00000688554.1">
    <molecule id="Q86YG4-2"/>
    <property type="protein sequence ID" value="ENSP00000509504.1"/>
    <property type="gene ID" value="ENSG00000144130.12"/>
</dbReference>
<dbReference type="GeneID" id="284958"/>
<dbReference type="MANE-Select" id="ENST00000688554.1">
    <molecule id="Q86YG4-2"/>
    <property type="protein sequence ID" value="ENSP00000509504.1"/>
    <property type="RefSeq nucleotide sequence ID" value="NM_001393655.1"/>
    <property type="RefSeq protein sequence ID" value="NP_001380584.1"/>
</dbReference>
<dbReference type="UCSC" id="uc002tid.4">
    <molecule id="Q86YG4-1"/>
    <property type="organism name" value="human"/>
</dbReference>
<dbReference type="AGR" id="HGNC:27678"/>
<dbReference type="GeneCards" id="NT5DC4"/>
<dbReference type="HGNC" id="HGNC:27678">
    <property type="gene designation" value="NT5DC4"/>
</dbReference>
<dbReference type="HPA" id="ENSG00000144130">
    <property type="expression patterns" value="Tissue enhanced (bone marrow, testis)"/>
</dbReference>
<dbReference type="MalaCards" id="NT5DC4"/>
<dbReference type="neXtProt" id="NX_Q86YG4"/>
<dbReference type="OpenTargets" id="ENSG00000144130"/>
<dbReference type="VEuPathDB" id="HostDB:ENSG00000144130"/>
<dbReference type="eggNOG" id="KOG2469">
    <property type="taxonomic scope" value="Eukaryota"/>
</dbReference>
<dbReference type="GeneTree" id="ENSGT00940000162631"/>
<dbReference type="HOGENOM" id="CLU_017845_3_1_1"/>
<dbReference type="InParanoid" id="Q86YG4"/>
<dbReference type="OMA" id="EIQMPHE"/>
<dbReference type="OrthoDB" id="10252832at2759"/>
<dbReference type="PAN-GO" id="Q86YG4">
    <property type="GO annotations" value="1 GO annotation based on evolutionary models"/>
</dbReference>
<dbReference type="PhylomeDB" id="Q86YG4"/>
<dbReference type="TreeFam" id="TF315266"/>
<dbReference type="PathwayCommons" id="Q86YG4"/>
<dbReference type="SignaLink" id="Q86YG4"/>
<dbReference type="ChiTaRS" id="NT5DC4">
    <property type="organism name" value="human"/>
</dbReference>
<dbReference type="Pharos" id="Q86YG4">
    <property type="development level" value="Tdark"/>
</dbReference>
<dbReference type="PRO" id="PR:Q86YG4"/>
<dbReference type="Proteomes" id="UP000005640">
    <property type="component" value="Chromosome 2"/>
</dbReference>
<dbReference type="RNAct" id="Q86YG4">
    <property type="molecule type" value="protein"/>
</dbReference>
<dbReference type="Bgee" id="ENSG00000144130">
    <property type="expression patterns" value="Expressed in primordial germ cell in gonad and 101 other cell types or tissues"/>
</dbReference>
<dbReference type="GO" id="GO:0008253">
    <property type="term" value="F:5'-nucleotidase activity"/>
    <property type="evidence" value="ECO:0000318"/>
    <property type="project" value="GO_Central"/>
</dbReference>
<dbReference type="GO" id="GO:0046872">
    <property type="term" value="F:metal ion binding"/>
    <property type="evidence" value="ECO:0007669"/>
    <property type="project" value="UniProtKB-KW"/>
</dbReference>
<dbReference type="CDD" id="cd07522">
    <property type="entry name" value="HAD_cN-II"/>
    <property type="match status" value="1"/>
</dbReference>
<dbReference type="FunFam" id="3.40.50.1000:FF:000021">
    <property type="entry name" value="NT5C2 isoform 1"/>
    <property type="match status" value="1"/>
</dbReference>
<dbReference type="Gene3D" id="3.40.50.1000">
    <property type="entry name" value="HAD superfamily/HAD-like"/>
    <property type="match status" value="1"/>
</dbReference>
<dbReference type="InterPro" id="IPR036412">
    <property type="entry name" value="HAD-like_sf"/>
</dbReference>
<dbReference type="InterPro" id="IPR008380">
    <property type="entry name" value="HAD-SF_hydro_IG_5-nucl"/>
</dbReference>
<dbReference type="InterPro" id="IPR023214">
    <property type="entry name" value="HAD_sf"/>
</dbReference>
<dbReference type="InterPro" id="IPR016695">
    <property type="entry name" value="Pur_nucleotidase"/>
</dbReference>
<dbReference type="NCBIfam" id="TIGR02244">
    <property type="entry name" value="HAD-IG-Ncltidse"/>
    <property type="match status" value="1"/>
</dbReference>
<dbReference type="PANTHER" id="PTHR12103">
    <property type="entry name" value="5'-NUCLEOTIDASE DOMAIN-CONTAINING"/>
    <property type="match status" value="1"/>
</dbReference>
<dbReference type="PANTHER" id="PTHR12103:SF18">
    <property type="entry name" value="5'-NUCLEOTIDASE DOMAIN-CONTAINING PROTEIN 4"/>
    <property type="match status" value="1"/>
</dbReference>
<dbReference type="Pfam" id="PF05761">
    <property type="entry name" value="5_nucleotid"/>
    <property type="match status" value="1"/>
</dbReference>
<dbReference type="PIRSF" id="PIRSF017434">
    <property type="entry name" value="Purine_5'-nucleotidase"/>
    <property type="match status" value="1"/>
</dbReference>
<dbReference type="SUPFAM" id="SSF56784">
    <property type="entry name" value="HAD-like"/>
    <property type="match status" value="1"/>
</dbReference>
<feature type="chain" id="PRO_0000344218" description="5'-nucleotidase domain-containing protein 4">
    <location>
        <begin position="1"/>
        <end position="428"/>
    </location>
</feature>
<feature type="active site" description="Nucleophile" evidence="1">
    <location>
        <position position="22"/>
    </location>
</feature>
<feature type="active site" description="Proton donor" evidence="1">
    <location>
        <position position="24"/>
    </location>
</feature>
<feature type="binding site" evidence="1">
    <location>
        <position position="22"/>
    </location>
    <ligand>
        <name>Mg(2+)</name>
        <dbReference type="ChEBI" id="CHEBI:18420"/>
    </ligand>
</feature>
<feature type="binding site" evidence="1">
    <location>
        <position position="24"/>
    </location>
    <ligand>
        <name>Mg(2+)</name>
        <dbReference type="ChEBI" id="CHEBI:18420"/>
    </ligand>
</feature>
<feature type="binding site" evidence="1">
    <location>
        <position position="317"/>
    </location>
    <ligand>
        <name>Mg(2+)</name>
        <dbReference type="ChEBI" id="CHEBI:18420"/>
    </ligand>
</feature>
<feature type="splice variant" id="VSP_062197" description="In isoform 2.">
    <original>MPAW</original>
    <variation>MASVDWREPEGLVSPQGPKQDWHQR</variation>
    <location>
        <begin position="1"/>
        <end position="4"/>
    </location>
</feature>
<feature type="splice variant" id="VSP_062198" description="In isoform 2.">
    <original>E</original>
    <variation>DLPLLR</variation>
    <location>
        <position position="100"/>
    </location>
</feature>
<feature type="splice variant" id="VSP_062199" description="In isoform 2.">
    <original>T</original>
    <variation>TVMAGAE</variation>
    <location>
        <position position="273"/>
    </location>
</feature>
<feature type="splice variant" id="VSP_062200" description="In isoform 2.">
    <original>SLPAKSCLSSAI</original>
    <variation>FIKRSHY</variation>
    <location>
        <begin position="417"/>
        <end position="428"/>
    </location>
</feature>
<feature type="sequence variant" id="VAR_088594" description="In dbSNP:rs4849116." evidence="2">
    <original>Y</original>
    <variation>S</variation>
    <location>
        <position position="283"/>
    </location>
</feature>
<organism>
    <name type="scientific">Homo sapiens</name>
    <name type="common">Human</name>
    <dbReference type="NCBI Taxonomy" id="9606"/>
    <lineage>
        <taxon>Eukaryota</taxon>
        <taxon>Metazoa</taxon>
        <taxon>Chordata</taxon>
        <taxon>Craniata</taxon>
        <taxon>Vertebrata</taxon>
        <taxon>Euteleostomi</taxon>
        <taxon>Mammalia</taxon>
        <taxon>Eutheria</taxon>
        <taxon>Euarchontoglires</taxon>
        <taxon>Primates</taxon>
        <taxon>Haplorrhini</taxon>
        <taxon>Catarrhini</taxon>
        <taxon>Hominidae</taxon>
        <taxon>Homo</taxon>
    </lineage>
</organism>
<protein>
    <recommendedName>
        <fullName>5'-nucleotidase domain-containing protein 4</fullName>
    </recommendedName>
</protein>